<organism>
    <name type="scientific">Mus musculus</name>
    <name type="common">Mouse</name>
    <dbReference type="NCBI Taxonomy" id="10090"/>
    <lineage>
        <taxon>Eukaryota</taxon>
        <taxon>Metazoa</taxon>
        <taxon>Chordata</taxon>
        <taxon>Craniata</taxon>
        <taxon>Vertebrata</taxon>
        <taxon>Euteleostomi</taxon>
        <taxon>Mammalia</taxon>
        <taxon>Eutheria</taxon>
        <taxon>Euarchontoglires</taxon>
        <taxon>Glires</taxon>
        <taxon>Rodentia</taxon>
        <taxon>Myomorpha</taxon>
        <taxon>Muroidea</taxon>
        <taxon>Muridae</taxon>
        <taxon>Murinae</taxon>
        <taxon>Mus</taxon>
        <taxon>Mus</taxon>
    </lineage>
</organism>
<comment type="function">
    <text evidence="2 6">Key enzyme in methionine and folate homeostasis responsible for the reactivation of methionine synthase (MTR/MS) activity by catalyzing the reductive methylation of MTR-bound cob(II)alamin. Cobalamin (vitamin B12) forms a complex with MTR to serve as an intermediary in methyl transfer reactions that cycles between MTR-bound methylcob(III)alamin and MTR bound-cob(I)alamin forms, and occasional oxidative escape of the cob(I)alamin intermediate during the catalytic cycle leads to the inactive cob(II)alamin species. The processing of cobalamin in the cytosol occurs in a multiprotein complex composed of at least MMACHC, MMADHC, MTRR and MTR which may contribute to shuttle safely and efficiently cobalamin towards MTR in order to produce methionine (By similarity). Also necessary for the utilization of methyl groups from the folate cycle, thereby affecting transgenerational epigenetic inheritance (PubMed:24074862). Also acts as a molecular chaperone for methionine synthase by stabilizing apoMTR and incorporating methylcob(III)alamin into apoMTR to form the holoenzyme. Also serves as an aquacob(III)alamin reductase by reducing aquacob(III)alamin to cob(II)alamin; this reduction leads to stimulation of the conversion of apoMTR and aquacob(III)alamin to MTR holoenzyme (By similarity).</text>
</comment>
<comment type="catalytic activity">
    <reaction evidence="2">
        <text>2 methylcob(III)alamin-[methionine synthase] + 2 S-adenosyl-L-homocysteine + NADP(+) + H(+) = 2 cob(II)alamin-[methionine synthase] + 2 S-adenosyl-L-methionine + NADPH</text>
        <dbReference type="Rhea" id="RHEA:23908"/>
        <dbReference type="Rhea" id="RHEA-COMP:14714"/>
        <dbReference type="Rhea" id="RHEA-COMP:14715"/>
        <dbReference type="ChEBI" id="CHEBI:15378"/>
        <dbReference type="ChEBI" id="CHEBI:16304"/>
        <dbReference type="ChEBI" id="CHEBI:28115"/>
        <dbReference type="ChEBI" id="CHEBI:57783"/>
        <dbReference type="ChEBI" id="CHEBI:57856"/>
        <dbReference type="ChEBI" id="CHEBI:58349"/>
        <dbReference type="ChEBI" id="CHEBI:59789"/>
        <dbReference type="EC" id="1.16.1.8"/>
    </reaction>
</comment>
<comment type="catalytic activity">
    <reaction evidence="2">
        <text>2 cob(II)alamin + A + 2 H2O + 2 H(+) = 2 aquacob(III)alamin + AH2</text>
        <dbReference type="Rhea" id="RHEA:20752"/>
        <dbReference type="ChEBI" id="CHEBI:13193"/>
        <dbReference type="ChEBI" id="CHEBI:15377"/>
        <dbReference type="ChEBI" id="CHEBI:15378"/>
        <dbReference type="ChEBI" id="CHEBI:15852"/>
        <dbReference type="ChEBI" id="CHEBI:16304"/>
        <dbReference type="ChEBI" id="CHEBI:17499"/>
    </reaction>
    <physiologicalReaction direction="right-to-left" evidence="2">
        <dbReference type="Rhea" id="RHEA:20754"/>
    </physiologicalReaction>
</comment>
<comment type="cofactor">
    <cofactor evidence="2">
        <name>FAD</name>
        <dbReference type="ChEBI" id="CHEBI:57692"/>
    </cofactor>
</comment>
<comment type="cofactor">
    <cofactor evidence="2">
        <name>FMN</name>
        <dbReference type="ChEBI" id="CHEBI:58210"/>
    </cofactor>
</comment>
<comment type="subunit">
    <text evidence="2">Forms a multiprotein complex with MMACHC, MMADHC and MTR.</text>
</comment>
<comment type="subcellular location">
    <subcellularLocation>
        <location evidence="2">Cytoplasm</location>
    </subcellularLocation>
</comment>
<comment type="disruption phenotype">
    <text evidence="5 6">Female mice have more resorptions and more delayed embryos per litter as well as embryonic delays and defects: placentae of mothers are smaller and their embryos are smaller and display myocardial hypoplasia and a higher incidence of ventricular septal defects per litter (PubMed:18413293). Epigenetic transmission of developmental disorders between generations: a hypomorphic mutation disrupts folate metabolism and is associated with effects on offspring development that are transmitted transgenerationally. The epigenetic influences caused by Mtrr hypomorphic deficiency in mice leads to 2 distinctive phenotypes: (1) an atypical uterine environment in their wild-type daughters that causes growth defects in their wild-type grandprogeny and (2) congenital malformations in their wild-type grandprogeny due to epigenetic inheritance via the germline, the effects of which persist for at least up to 4 wild-type generations after an Mtrr-deficient maternal ancestor. These effects are associated with altered DNA methylation patterns (PubMed:24074862).</text>
</comment>
<comment type="miscellaneous">
    <text evidence="7">It is debated whether the reduction of free aquacob(II)alamin occurs spontaneously or is enzyme catalyzed.</text>
</comment>
<comment type="online information" name="Protein Spotlight">
    <link uri="https://www.proteinspotlight.org/back_issues/166/"/>
    <text>The hidden things - Issue 166 of December 2014</text>
</comment>
<sequence length="696" mass="77518">MRRFLLLYATQRGQAKAIAEEISEQAVSHGFSADLHCISESEKYDLKTETGPLVMVVSTTGTGDPPDTARKFVKEIHNKTLPTDYFAHLRYGLLGLGDSEYTYFCNGGKVIDKRLQELGAQRFYDTGHADDCVGLELVVEPWIDGLWAALTKHFKSLGGQENMSDTLSRASDAPLSTAMKPELLHIQSQVELLRLEDVGERDSELREQNETNRGQQGRIEDFDSSLVHSVPPLSQSSLSIPAVPPEYLEVHLQESLGQEENQASVPSGDPSFQVPISKAIRLTTNDAVKSTLLLELDISKIEFSHQPGDSFNVTCPNSDREVEELLQRLQLADKRAHRVILKIKTDTKKKGAALPAHVPEGRSLQFILTWCLEIRAVPKKAFLRALAEHTSSATEKRRLQELCSKQGAADYNRFIRDASVCLLDLLLTFPSCQPPLSLLLEHLPKLQPRPYSCASSSLRHPDKLHFVFNIVEFPPSTTAASPRKGVCTGWLATLVAPFLQPNTDVSNADSGDTLAPEIRISPRATNAFHLPEDPSAPIIMVGPGTGVAPFVGFLQHREKLQEQHPDGKFGAMWLFFGCRHKDRDYLFREELRHFLKTGVLTHLKVSFSRDAAPDGEEAPAKYVQDNLQRHSQQVARTLLQENGYIYVCGDAKNMAKDVNDTLIGIISNEAGVDKLEAMKTLATLKQEKRYLQDIWS</sequence>
<dbReference type="EC" id="1.16.1.8" evidence="2"/>
<dbReference type="EMBL" id="AK028628">
    <property type="protein sequence ID" value="BAC26039.1"/>
    <property type="molecule type" value="mRNA"/>
</dbReference>
<dbReference type="EMBL" id="AK155359">
    <property type="protein sequence ID" value="BAE33215.1"/>
    <property type="molecule type" value="mRNA"/>
</dbReference>
<dbReference type="EMBL" id="AK163449">
    <property type="protein sequence ID" value="BAE37348.1"/>
    <property type="molecule type" value="mRNA"/>
</dbReference>
<dbReference type="EMBL" id="CH466563">
    <property type="protein sequence ID" value="EDL37004.1"/>
    <property type="molecule type" value="Genomic_DNA"/>
</dbReference>
<dbReference type="EMBL" id="BC025942">
    <property type="protein sequence ID" value="AAH25942.1"/>
    <property type="molecule type" value="mRNA"/>
</dbReference>
<dbReference type="CCDS" id="CCDS26620.1"/>
<dbReference type="RefSeq" id="NP_001295404.1">
    <property type="nucleotide sequence ID" value="NM_001308475.1"/>
</dbReference>
<dbReference type="RefSeq" id="NP_766068.1">
    <property type="nucleotide sequence ID" value="NM_172480.3"/>
</dbReference>
<dbReference type="RefSeq" id="XP_006517242.1">
    <property type="nucleotide sequence ID" value="XM_006517179.3"/>
</dbReference>
<dbReference type="RefSeq" id="XP_006517244.1">
    <property type="nucleotide sequence ID" value="XM_006517181.3"/>
</dbReference>
<dbReference type="RefSeq" id="XP_006517245.1">
    <property type="nucleotide sequence ID" value="XM_006517182.1"/>
</dbReference>
<dbReference type="SMR" id="Q8C1A3"/>
<dbReference type="BioGRID" id="229121">
    <property type="interactions" value="1"/>
</dbReference>
<dbReference type="FunCoup" id="Q8C1A3">
    <property type="interactions" value="1564"/>
</dbReference>
<dbReference type="STRING" id="10090.ENSMUSP00000152387"/>
<dbReference type="iPTMnet" id="Q8C1A3"/>
<dbReference type="PhosphoSitePlus" id="Q8C1A3"/>
<dbReference type="PaxDb" id="10090-ENSMUSP00000039810"/>
<dbReference type="PeptideAtlas" id="Q8C1A3"/>
<dbReference type="ProteomicsDB" id="287329"/>
<dbReference type="Pumba" id="Q8C1A3"/>
<dbReference type="DNASU" id="210009"/>
<dbReference type="GeneID" id="210009"/>
<dbReference type="KEGG" id="mmu:210009"/>
<dbReference type="UCSC" id="uc007rby.1">
    <property type="organism name" value="mouse"/>
</dbReference>
<dbReference type="AGR" id="MGI:1891037"/>
<dbReference type="CTD" id="4552"/>
<dbReference type="MGI" id="MGI:1891037">
    <property type="gene designation" value="Mtrr"/>
</dbReference>
<dbReference type="eggNOG" id="KOG1158">
    <property type="taxonomic scope" value="Eukaryota"/>
</dbReference>
<dbReference type="InParanoid" id="Q8C1A3"/>
<dbReference type="OrthoDB" id="1856718at2759"/>
<dbReference type="TreeFam" id="TF105716"/>
<dbReference type="Reactome" id="R-MMU-156581">
    <property type="pathway name" value="Methylation"/>
</dbReference>
<dbReference type="Reactome" id="R-MMU-1614635">
    <property type="pathway name" value="Sulfur amino acid metabolism"/>
</dbReference>
<dbReference type="Reactome" id="R-MMU-9759218">
    <property type="pathway name" value="Cobalamin (Cbl) metabolism"/>
</dbReference>
<dbReference type="BioGRID-ORCS" id="210009">
    <property type="hits" value="16 hits in 78 CRISPR screens"/>
</dbReference>
<dbReference type="ChiTaRS" id="Mtrr">
    <property type="organism name" value="mouse"/>
</dbReference>
<dbReference type="PRO" id="PR:Q8C1A3"/>
<dbReference type="Proteomes" id="UP000000589">
    <property type="component" value="Unplaced"/>
</dbReference>
<dbReference type="RNAct" id="Q8C1A3">
    <property type="molecule type" value="protein"/>
</dbReference>
<dbReference type="GO" id="GO:0005829">
    <property type="term" value="C:cytosol"/>
    <property type="evidence" value="ECO:0000266"/>
    <property type="project" value="MGI"/>
</dbReference>
<dbReference type="GO" id="GO:0030586">
    <property type="term" value="F:[methionine synthase] reductase (NADPH) activity"/>
    <property type="evidence" value="ECO:0000315"/>
    <property type="project" value="BHF-UCL"/>
</dbReference>
<dbReference type="GO" id="GO:0050660">
    <property type="term" value="F:flavin adenine dinucleotide binding"/>
    <property type="evidence" value="ECO:0000250"/>
    <property type="project" value="UniProtKB"/>
</dbReference>
<dbReference type="GO" id="GO:0010181">
    <property type="term" value="F:FMN binding"/>
    <property type="evidence" value="ECO:0000266"/>
    <property type="project" value="MGI"/>
</dbReference>
<dbReference type="GO" id="GO:0016723">
    <property type="term" value="F:oxidoreductase activity, acting on metal ions, NAD or NADP as acceptor"/>
    <property type="evidence" value="ECO:0000250"/>
    <property type="project" value="UniProtKB"/>
</dbReference>
<dbReference type="GO" id="GO:0009235">
    <property type="term" value="P:cobalamin metabolic process"/>
    <property type="evidence" value="ECO:0000315"/>
    <property type="project" value="MGI"/>
</dbReference>
<dbReference type="GO" id="GO:0046655">
    <property type="term" value="P:folic acid metabolic process"/>
    <property type="evidence" value="ECO:0000315"/>
    <property type="project" value="UniProtKB"/>
</dbReference>
<dbReference type="GO" id="GO:0050667">
    <property type="term" value="P:homocysteine metabolic process"/>
    <property type="evidence" value="ECO:0000315"/>
    <property type="project" value="BHF-UCL"/>
</dbReference>
<dbReference type="GO" id="GO:0009086">
    <property type="term" value="P:methionine biosynthetic process"/>
    <property type="evidence" value="ECO:0000315"/>
    <property type="project" value="BHF-UCL"/>
</dbReference>
<dbReference type="GO" id="GO:0050821">
    <property type="term" value="P:protein stabilization"/>
    <property type="evidence" value="ECO:0000266"/>
    <property type="project" value="MGI"/>
</dbReference>
<dbReference type="GO" id="GO:0033353">
    <property type="term" value="P:S-adenosylmethionine cycle"/>
    <property type="evidence" value="ECO:0000315"/>
    <property type="project" value="BHF-UCL"/>
</dbReference>
<dbReference type="CDD" id="cd06203">
    <property type="entry name" value="methionine_synthase_red"/>
    <property type="match status" value="1"/>
</dbReference>
<dbReference type="FunFam" id="1.20.990.10:FF:000007">
    <property type="entry name" value="Methionine synthase reductase"/>
    <property type="match status" value="1"/>
</dbReference>
<dbReference type="FunFam" id="3.40.50.360:FF:000025">
    <property type="entry name" value="methionine synthase reductase"/>
    <property type="match status" value="1"/>
</dbReference>
<dbReference type="FunFam" id="3.40.50.80:FF:000018">
    <property type="entry name" value="NADPH--cytochrome P450 reductase"/>
    <property type="match status" value="1"/>
</dbReference>
<dbReference type="Gene3D" id="3.40.50.360">
    <property type="match status" value="1"/>
</dbReference>
<dbReference type="Gene3D" id="1.20.990.10">
    <property type="entry name" value="NADPH-cytochrome p450 Reductase, Chain A, domain 3"/>
    <property type="match status" value="1"/>
</dbReference>
<dbReference type="Gene3D" id="3.40.50.80">
    <property type="entry name" value="Nucleotide-binding domain of ferredoxin-NADP reductase (FNR) module"/>
    <property type="match status" value="1"/>
</dbReference>
<dbReference type="Gene3D" id="2.40.30.10">
    <property type="entry name" value="Translation factors"/>
    <property type="match status" value="1"/>
</dbReference>
<dbReference type="InterPro" id="IPR003097">
    <property type="entry name" value="CysJ-like_FAD-binding"/>
</dbReference>
<dbReference type="InterPro" id="IPR017927">
    <property type="entry name" value="FAD-bd_FR_type"/>
</dbReference>
<dbReference type="InterPro" id="IPR001094">
    <property type="entry name" value="Flavdoxin-like"/>
</dbReference>
<dbReference type="InterPro" id="IPR008254">
    <property type="entry name" value="Flavodoxin/NO_synth"/>
</dbReference>
<dbReference type="InterPro" id="IPR001709">
    <property type="entry name" value="Flavoprot_Pyr_Nucl_cyt_Rdtase"/>
</dbReference>
<dbReference type="InterPro" id="IPR029039">
    <property type="entry name" value="Flavoprotein-like_sf"/>
</dbReference>
<dbReference type="InterPro" id="IPR039261">
    <property type="entry name" value="FNR_nucleotide-bd"/>
</dbReference>
<dbReference type="InterPro" id="IPR023173">
    <property type="entry name" value="NADPH_Cyt_P450_Rdtase_alpha"/>
</dbReference>
<dbReference type="InterPro" id="IPR001433">
    <property type="entry name" value="OxRdtase_FAD/NAD-bd"/>
</dbReference>
<dbReference type="InterPro" id="IPR017938">
    <property type="entry name" value="Riboflavin_synthase-like_b-brl"/>
</dbReference>
<dbReference type="PANTHER" id="PTHR19384:SF84">
    <property type="entry name" value="METHIONINE SYNTHASE REDUCTASE"/>
    <property type="match status" value="1"/>
</dbReference>
<dbReference type="PANTHER" id="PTHR19384">
    <property type="entry name" value="NITRIC OXIDE SYNTHASE-RELATED"/>
    <property type="match status" value="1"/>
</dbReference>
<dbReference type="Pfam" id="PF00667">
    <property type="entry name" value="FAD_binding_1"/>
    <property type="match status" value="1"/>
</dbReference>
<dbReference type="Pfam" id="PF00258">
    <property type="entry name" value="Flavodoxin_1"/>
    <property type="match status" value="1"/>
</dbReference>
<dbReference type="Pfam" id="PF00175">
    <property type="entry name" value="NAD_binding_1"/>
    <property type="match status" value="1"/>
</dbReference>
<dbReference type="PRINTS" id="PR00369">
    <property type="entry name" value="FLAVODOXIN"/>
</dbReference>
<dbReference type="PRINTS" id="PR00371">
    <property type="entry name" value="FPNCR"/>
</dbReference>
<dbReference type="SUPFAM" id="SSF52343">
    <property type="entry name" value="Ferredoxin reductase-like, C-terminal NADP-linked domain"/>
    <property type="match status" value="1"/>
</dbReference>
<dbReference type="SUPFAM" id="SSF52218">
    <property type="entry name" value="Flavoproteins"/>
    <property type="match status" value="1"/>
</dbReference>
<dbReference type="SUPFAM" id="SSF63380">
    <property type="entry name" value="Riboflavin synthase domain-like"/>
    <property type="match status" value="1"/>
</dbReference>
<dbReference type="PROSITE" id="PS51384">
    <property type="entry name" value="FAD_FR"/>
    <property type="match status" value="1"/>
</dbReference>
<dbReference type="PROSITE" id="PS50902">
    <property type="entry name" value="FLAVODOXIN_LIKE"/>
    <property type="match status" value="1"/>
</dbReference>
<feature type="chain" id="PRO_0000409308" description="Methionine synthase reductase">
    <location>
        <begin position="1"/>
        <end position="696"/>
    </location>
</feature>
<feature type="domain" description="Flavodoxin-like" evidence="3">
    <location>
        <begin position="4"/>
        <end position="147"/>
    </location>
</feature>
<feature type="domain" description="FAD-binding FR-type" evidence="4">
    <location>
        <begin position="269"/>
        <end position="531"/>
    </location>
</feature>
<feature type="region of interest" description="Hinge" evidence="1">
    <location>
        <begin position="166"/>
        <end position="245"/>
    </location>
</feature>
<feature type="binding site" evidence="3">
    <location>
        <begin position="10"/>
        <end position="14"/>
    </location>
    <ligand>
        <name>FMN</name>
        <dbReference type="ChEBI" id="CHEBI:58210"/>
    </ligand>
</feature>
<feature type="binding site" evidence="3">
    <location>
        <begin position="93"/>
        <end position="124"/>
    </location>
    <ligand>
        <name>FMN</name>
        <dbReference type="ChEBI" id="CHEBI:58210"/>
    </ligand>
</feature>
<feature type="binding site" evidence="1">
    <location>
        <position position="289"/>
    </location>
    <ligand>
        <name>NADP(+)</name>
        <dbReference type="ChEBI" id="CHEBI:58349"/>
    </ligand>
</feature>
<feature type="binding site" evidence="1">
    <location>
        <begin position="449"/>
        <end position="452"/>
    </location>
    <ligand>
        <name>FAD</name>
        <dbReference type="ChEBI" id="CHEBI:57692"/>
    </ligand>
</feature>
<feature type="binding site" evidence="1">
    <location>
        <begin position="485"/>
        <end position="488"/>
    </location>
    <ligand>
        <name>FAD</name>
        <dbReference type="ChEBI" id="CHEBI:57692"/>
    </ligand>
</feature>
<feature type="binding site" evidence="1">
    <location>
        <begin position="608"/>
        <end position="609"/>
    </location>
    <ligand>
        <name>NADP(+)</name>
        <dbReference type="ChEBI" id="CHEBI:58349"/>
    </ligand>
</feature>
<feature type="binding site" evidence="1">
    <location>
        <begin position="622"/>
        <end position="624"/>
    </location>
    <ligand>
        <name>NADP(+)</name>
        <dbReference type="ChEBI" id="CHEBI:58349"/>
    </ligand>
</feature>
<feature type="binding site" evidence="1">
    <location>
        <position position="657"/>
    </location>
    <ligand>
        <name>NADP(+)</name>
        <dbReference type="ChEBI" id="CHEBI:58349"/>
    </ligand>
</feature>
<feature type="binding site" evidence="1">
    <location>
        <position position="695"/>
    </location>
    <ligand>
        <name>FAD</name>
        <dbReference type="ChEBI" id="CHEBI:57692"/>
    </ligand>
</feature>
<feature type="modified residue" description="Phosphoserine" evidence="2">
    <location>
        <position position="171"/>
    </location>
</feature>
<feature type="modified residue" description="Phosphoserine" evidence="9">
    <location>
        <position position="188"/>
    </location>
</feature>
<feature type="sequence conflict" description="In Ref. 1; BAC26039/BAE37348." evidence="7" ref="1">
    <original>R</original>
    <variation>Q</variation>
    <location>
        <position position="90"/>
    </location>
</feature>
<feature type="sequence conflict" description="In Ref. 3; AAH25942." evidence="7" ref="3">
    <original>V</original>
    <variation>F</variation>
    <location>
        <position position="190"/>
    </location>
</feature>
<feature type="sequence conflict" description="In Ref. 1; BAC26039/BAE37348." evidence="7" ref="1">
    <original>V</original>
    <variation>M</variation>
    <location>
        <position position="198"/>
    </location>
</feature>
<feature type="sequence conflict" description="In Ref. 1; BAC26039/BAE37348." evidence="7" ref="1">
    <original>P</original>
    <variation>L</variation>
    <location>
        <position position="482"/>
    </location>
</feature>
<feature type="sequence conflict" description="In Ref. 1; BAC26039/BAE37348." evidence="7" ref="1">
    <original>A</original>
    <variation>V</variation>
    <location>
        <position position="508"/>
    </location>
</feature>
<feature type="sequence conflict" description="In Ref. 1; BAC26039/BAE37348." evidence="7" ref="1">
    <original>T</original>
    <variation>A</variation>
    <location>
        <position position="513"/>
    </location>
</feature>
<feature type="sequence conflict" description="In Ref. 1; BAC26039/BAE37348." evidence="7" ref="1">
    <original>I</original>
    <variation>V</variation>
    <location>
        <position position="645"/>
    </location>
</feature>
<evidence type="ECO:0000250" key="1"/>
<evidence type="ECO:0000250" key="2">
    <source>
        <dbReference type="UniProtKB" id="Q9UBK8"/>
    </source>
</evidence>
<evidence type="ECO:0000255" key="3">
    <source>
        <dbReference type="PROSITE-ProRule" id="PRU00088"/>
    </source>
</evidence>
<evidence type="ECO:0000255" key="4">
    <source>
        <dbReference type="PROSITE-ProRule" id="PRU00716"/>
    </source>
</evidence>
<evidence type="ECO:0000269" key="5">
    <source>
    </source>
</evidence>
<evidence type="ECO:0000269" key="6">
    <source>
    </source>
</evidence>
<evidence type="ECO:0000305" key="7"/>
<evidence type="ECO:0000312" key="8">
    <source>
        <dbReference type="MGI" id="MGI:1891037"/>
    </source>
</evidence>
<evidence type="ECO:0007744" key="9">
    <source>
    </source>
</evidence>
<name>MTRR_MOUSE</name>
<accession>Q8C1A3</accession>
<accession>Q3U2C6</accession>
<accession>Q8R0Y3</accession>
<reference key="1">
    <citation type="journal article" date="2005" name="Science">
        <title>The transcriptional landscape of the mammalian genome.</title>
        <authorList>
            <person name="Carninci P."/>
            <person name="Kasukawa T."/>
            <person name="Katayama S."/>
            <person name="Gough J."/>
            <person name="Frith M.C."/>
            <person name="Maeda N."/>
            <person name="Oyama R."/>
            <person name="Ravasi T."/>
            <person name="Lenhard B."/>
            <person name="Wells C."/>
            <person name="Kodzius R."/>
            <person name="Shimokawa K."/>
            <person name="Bajic V.B."/>
            <person name="Brenner S.E."/>
            <person name="Batalov S."/>
            <person name="Forrest A.R."/>
            <person name="Zavolan M."/>
            <person name="Davis M.J."/>
            <person name="Wilming L.G."/>
            <person name="Aidinis V."/>
            <person name="Allen J.E."/>
            <person name="Ambesi-Impiombato A."/>
            <person name="Apweiler R."/>
            <person name="Aturaliya R.N."/>
            <person name="Bailey T.L."/>
            <person name="Bansal M."/>
            <person name="Baxter L."/>
            <person name="Beisel K.W."/>
            <person name="Bersano T."/>
            <person name="Bono H."/>
            <person name="Chalk A.M."/>
            <person name="Chiu K.P."/>
            <person name="Choudhary V."/>
            <person name="Christoffels A."/>
            <person name="Clutterbuck D.R."/>
            <person name="Crowe M.L."/>
            <person name="Dalla E."/>
            <person name="Dalrymple B.P."/>
            <person name="de Bono B."/>
            <person name="Della Gatta G."/>
            <person name="di Bernardo D."/>
            <person name="Down T."/>
            <person name="Engstrom P."/>
            <person name="Fagiolini M."/>
            <person name="Faulkner G."/>
            <person name="Fletcher C.F."/>
            <person name="Fukushima T."/>
            <person name="Furuno M."/>
            <person name="Futaki S."/>
            <person name="Gariboldi M."/>
            <person name="Georgii-Hemming P."/>
            <person name="Gingeras T.R."/>
            <person name="Gojobori T."/>
            <person name="Green R.E."/>
            <person name="Gustincich S."/>
            <person name="Harbers M."/>
            <person name="Hayashi Y."/>
            <person name="Hensch T.K."/>
            <person name="Hirokawa N."/>
            <person name="Hill D."/>
            <person name="Huminiecki L."/>
            <person name="Iacono M."/>
            <person name="Ikeo K."/>
            <person name="Iwama A."/>
            <person name="Ishikawa T."/>
            <person name="Jakt M."/>
            <person name="Kanapin A."/>
            <person name="Katoh M."/>
            <person name="Kawasawa Y."/>
            <person name="Kelso J."/>
            <person name="Kitamura H."/>
            <person name="Kitano H."/>
            <person name="Kollias G."/>
            <person name="Krishnan S.P."/>
            <person name="Kruger A."/>
            <person name="Kummerfeld S.K."/>
            <person name="Kurochkin I.V."/>
            <person name="Lareau L.F."/>
            <person name="Lazarevic D."/>
            <person name="Lipovich L."/>
            <person name="Liu J."/>
            <person name="Liuni S."/>
            <person name="McWilliam S."/>
            <person name="Madan Babu M."/>
            <person name="Madera M."/>
            <person name="Marchionni L."/>
            <person name="Matsuda H."/>
            <person name="Matsuzawa S."/>
            <person name="Miki H."/>
            <person name="Mignone F."/>
            <person name="Miyake S."/>
            <person name="Morris K."/>
            <person name="Mottagui-Tabar S."/>
            <person name="Mulder N."/>
            <person name="Nakano N."/>
            <person name="Nakauchi H."/>
            <person name="Ng P."/>
            <person name="Nilsson R."/>
            <person name="Nishiguchi S."/>
            <person name="Nishikawa S."/>
            <person name="Nori F."/>
            <person name="Ohara O."/>
            <person name="Okazaki Y."/>
            <person name="Orlando V."/>
            <person name="Pang K.C."/>
            <person name="Pavan W.J."/>
            <person name="Pavesi G."/>
            <person name="Pesole G."/>
            <person name="Petrovsky N."/>
            <person name="Piazza S."/>
            <person name="Reed J."/>
            <person name="Reid J.F."/>
            <person name="Ring B.Z."/>
            <person name="Ringwald M."/>
            <person name="Rost B."/>
            <person name="Ruan Y."/>
            <person name="Salzberg S.L."/>
            <person name="Sandelin A."/>
            <person name="Schneider C."/>
            <person name="Schoenbach C."/>
            <person name="Sekiguchi K."/>
            <person name="Semple C.A."/>
            <person name="Seno S."/>
            <person name="Sessa L."/>
            <person name="Sheng Y."/>
            <person name="Shibata Y."/>
            <person name="Shimada H."/>
            <person name="Shimada K."/>
            <person name="Silva D."/>
            <person name="Sinclair B."/>
            <person name="Sperling S."/>
            <person name="Stupka E."/>
            <person name="Sugiura K."/>
            <person name="Sultana R."/>
            <person name="Takenaka Y."/>
            <person name="Taki K."/>
            <person name="Tammoja K."/>
            <person name="Tan S.L."/>
            <person name="Tang S."/>
            <person name="Taylor M.S."/>
            <person name="Tegner J."/>
            <person name="Teichmann S.A."/>
            <person name="Ueda H.R."/>
            <person name="van Nimwegen E."/>
            <person name="Verardo R."/>
            <person name="Wei C.L."/>
            <person name="Yagi K."/>
            <person name="Yamanishi H."/>
            <person name="Zabarovsky E."/>
            <person name="Zhu S."/>
            <person name="Zimmer A."/>
            <person name="Hide W."/>
            <person name="Bult C."/>
            <person name="Grimmond S.M."/>
            <person name="Teasdale R.D."/>
            <person name="Liu E.T."/>
            <person name="Brusic V."/>
            <person name="Quackenbush J."/>
            <person name="Wahlestedt C."/>
            <person name="Mattick J.S."/>
            <person name="Hume D.A."/>
            <person name="Kai C."/>
            <person name="Sasaki D."/>
            <person name="Tomaru Y."/>
            <person name="Fukuda S."/>
            <person name="Kanamori-Katayama M."/>
            <person name="Suzuki M."/>
            <person name="Aoki J."/>
            <person name="Arakawa T."/>
            <person name="Iida J."/>
            <person name="Imamura K."/>
            <person name="Itoh M."/>
            <person name="Kato T."/>
            <person name="Kawaji H."/>
            <person name="Kawagashira N."/>
            <person name="Kawashima T."/>
            <person name="Kojima M."/>
            <person name="Kondo S."/>
            <person name="Konno H."/>
            <person name="Nakano K."/>
            <person name="Ninomiya N."/>
            <person name="Nishio T."/>
            <person name="Okada M."/>
            <person name="Plessy C."/>
            <person name="Shibata K."/>
            <person name="Shiraki T."/>
            <person name="Suzuki S."/>
            <person name="Tagami M."/>
            <person name="Waki K."/>
            <person name="Watahiki A."/>
            <person name="Okamura-Oho Y."/>
            <person name="Suzuki H."/>
            <person name="Kawai J."/>
            <person name="Hayashizaki Y."/>
        </authorList>
    </citation>
    <scope>NUCLEOTIDE SEQUENCE [LARGE SCALE MRNA]</scope>
    <source>
        <strain>C57BL/6J</strain>
        <strain>NOD</strain>
        <tissue>Corpora quadrigemina</tissue>
        <tissue>Skin</tissue>
    </source>
</reference>
<reference key="2">
    <citation type="submission" date="2005-07" db="EMBL/GenBank/DDBJ databases">
        <authorList>
            <person name="Mural R.J."/>
            <person name="Adams M.D."/>
            <person name="Myers E.W."/>
            <person name="Smith H.O."/>
            <person name="Venter J.C."/>
        </authorList>
    </citation>
    <scope>NUCLEOTIDE SEQUENCE [LARGE SCALE GENOMIC DNA]</scope>
</reference>
<reference key="3">
    <citation type="journal article" date="2004" name="Genome Res.">
        <title>The status, quality, and expansion of the NIH full-length cDNA project: the Mammalian Gene Collection (MGC).</title>
        <authorList>
            <consortium name="The MGC Project Team"/>
        </authorList>
    </citation>
    <scope>NUCLEOTIDE SEQUENCE [LARGE SCALE MRNA]</scope>
    <source>
        <strain>FVB/N</strain>
        <tissue>Liver</tissue>
    </source>
</reference>
<reference key="4">
    <citation type="journal article" date="2008" name="Mol. Genet. Metab.">
        <title>Methionine synthase reductase deficiency results in adverse reproductive outcomes and congenital heart defects in mice.</title>
        <authorList>
            <person name="Deng L."/>
            <person name="Elmore C.L."/>
            <person name="Lawrance A.K."/>
            <person name="Matthews R.G."/>
            <person name="Rozen R."/>
        </authorList>
    </citation>
    <scope>DISRUPTION PHENOTYPE</scope>
</reference>
<reference key="5">
    <citation type="journal article" date="2010" name="Cell">
        <title>A tissue-specific atlas of mouse protein phosphorylation and expression.</title>
        <authorList>
            <person name="Huttlin E.L."/>
            <person name="Jedrychowski M.P."/>
            <person name="Elias J.E."/>
            <person name="Goswami T."/>
            <person name="Rad R."/>
            <person name="Beausoleil S.A."/>
            <person name="Villen J."/>
            <person name="Haas W."/>
            <person name="Sowa M.E."/>
            <person name="Gygi S.P."/>
        </authorList>
    </citation>
    <scope>PHOSPHORYLATION [LARGE SCALE ANALYSIS] AT SER-188</scope>
    <scope>IDENTIFICATION BY MASS SPECTROMETRY [LARGE SCALE ANALYSIS]</scope>
    <source>
        <tissue>Brown adipose tissue</tissue>
        <tissue>Pancreas</tissue>
    </source>
</reference>
<reference key="6">
    <citation type="journal article" date="2013" name="Cell">
        <title>Mutation in folate metabolism causes epigenetic instability and transgenerational effects on development.</title>
        <authorList>
            <person name="Padmanabhan N."/>
            <person name="Jia D."/>
            <person name="Geary-Joo C."/>
            <person name="Wu X."/>
            <person name="Ferguson-Smith A.C."/>
            <person name="Fung E."/>
            <person name="Bieda M.C."/>
            <person name="Snyder F.F."/>
            <person name="Gravel R.A."/>
            <person name="Cross J.C."/>
            <person name="Watson E.D."/>
        </authorList>
    </citation>
    <scope>FUNCTION</scope>
    <scope>DISRUPTION PHENOTYPE</scope>
</reference>
<proteinExistence type="evidence at protein level"/>
<keyword id="KW-0028">Amino-acid biosynthesis</keyword>
<keyword id="KW-0963">Cytoplasm</keyword>
<keyword id="KW-0274">FAD</keyword>
<keyword id="KW-0285">Flavoprotein</keyword>
<keyword id="KW-0288">FMN</keyword>
<keyword id="KW-0486">Methionine biosynthesis</keyword>
<keyword id="KW-0521">NADP</keyword>
<keyword id="KW-0560">Oxidoreductase</keyword>
<keyword id="KW-0597">Phosphoprotein</keyword>
<keyword id="KW-1185">Reference proteome</keyword>
<keyword id="KW-0949">S-adenosyl-L-methionine</keyword>
<gene>
    <name evidence="8" type="primary">Mtrr</name>
</gene>
<protein>
    <recommendedName>
        <fullName>Methionine synthase reductase</fullName>
        <shortName>MSR</shortName>
        <ecNumber evidence="2">1.16.1.8</ecNumber>
    </recommendedName>
    <alternativeName>
        <fullName>Aquacobalamin reductase</fullName>
        <shortName>AqCbl reductase</shortName>
    </alternativeName>
</protein>